<sequence length="31" mass="3349">MSVFLGYIIFLAAFFGLATGLFLGLKAIKLI</sequence>
<accession>Q1XDR6</accession>
<dbReference type="EMBL" id="AP006715">
    <property type="protein sequence ID" value="BAE92345.1"/>
    <property type="molecule type" value="Genomic_DNA"/>
</dbReference>
<dbReference type="RefSeq" id="YP_536902.1">
    <property type="nucleotide sequence ID" value="NC_007932.1"/>
</dbReference>
<dbReference type="SMR" id="Q1XDR6"/>
<dbReference type="GO" id="GO:0009535">
    <property type="term" value="C:chloroplast thylakoid membrane"/>
    <property type="evidence" value="ECO:0007669"/>
    <property type="project" value="UniProtKB-SubCell"/>
</dbReference>
<dbReference type="GO" id="GO:0009512">
    <property type="term" value="C:cytochrome b6f complex"/>
    <property type="evidence" value="ECO:0007669"/>
    <property type="project" value="InterPro"/>
</dbReference>
<dbReference type="GO" id="GO:0045158">
    <property type="term" value="F:electron transporter, transferring electrons within cytochrome b6/f complex of photosystem II activity"/>
    <property type="evidence" value="ECO:0007669"/>
    <property type="project" value="UniProtKB-UniRule"/>
</dbReference>
<dbReference type="GO" id="GO:0015979">
    <property type="term" value="P:photosynthesis"/>
    <property type="evidence" value="ECO:0007669"/>
    <property type="project" value="UniProtKB-KW"/>
</dbReference>
<dbReference type="HAMAP" id="MF_00433">
    <property type="entry name" value="Cytb6_f_PetL"/>
    <property type="match status" value="1"/>
</dbReference>
<dbReference type="InterPro" id="IPR007802">
    <property type="entry name" value="Cyt_b6/f_cplx_su6"/>
</dbReference>
<dbReference type="Pfam" id="PF05115">
    <property type="entry name" value="PetL"/>
    <property type="match status" value="1"/>
</dbReference>
<dbReference type="SUPFAM" id="SSF103436">
    <property type="entry name" value="PetL subunit of the cytochrome b6f complex"/>
    <property type="match status" value="1"/>
</dbReference>
<comment type="function">
    <text evidence="1">Component of the cytochrome b6-f complex, which mediates electron transfer between photosystem II (PSII) and photosystem I (PSI), cyclic electron flow around PSI, and state transitions. PetL is important for photoautotrophic growth as well as for electron transfer efficiency and stability of the cytochrome b6-f complex.</text>
</comment>
<comment type="subunit">
    <text evidence="1">The 4 large subunits of the cytochrome b6-f complex are cytochrome b6, subunit IV (17 kDa polypeptide, PetD), cytochrome f and the Rieske protein, while the 4 small subunits are PetG, PetL, PetM and PetN. The complex functions as a dimer.</text>
</comment>
<comment type="subcellular location">
    <subcellularLocation>
        <location evidence="1">Plastid</location>
        <location evidence="1">Chloroplast thylakoid membrane</location>
        <topology evidence="1">Single-pass membrane protein</topology>
    </subcellularLocation>
</comment>
<comment type="similarity">
    <text evidence="1">Belongs to the PetL family.</text>
</comment>
<keyword id="KW-0150">Chloroplast</keyword>
<keyword id="KW-0249">Electron transport</keyword>
<keyword id="KW-0472">Membrane</keyword>
<keyword id="KW-0602">Photosynthesis</keyword>
<keyword id="KW-0934">Plastid</keyword>
<keyword id="KW-0793">Thylakoid</keyword>
<keyword id="KW-0812">Transmembrane</keyword>
<keyword id="KW-1133">Transmembrane helix</keyword>
<keyword id="KW-0813">Transport</keyword>
<proteinExistence type="inferred from homology"/>
<organism>
    <name type="scientific">Pyropia yezoensis</name>
    <name type="common">Susabi-nori</name>
    <name type="synonym">Porphyra yezoensis</name>
    <dbReference type="NCBI Taxonomy" id="2788"/>
    <lineage>
        <taxon>Eukaryota</taxon>
        <taxon>Rhodophyta</taxon>
        <taxon>Bangiophyceae</taxon>
        <taxon>Bangiales</taxon>
        <taxon>Bangiaceae</taxon>
        <taxon>Pyropia</taxon>
    </lineage>
</organism>
<evidence type="ECO:0000255" key="1">
    <source>
        <dbReference type="HAMAP-Rule" id="MF_00433"/>
    </source>
</evidence>
<feature type="chain" id="PRO_0000275537" description="Cytochrome b6-f complex subunit 6">
    <location>
        <begin position="1"/>
        <end position="31"/>
    </location>
</feature>
<feature type="transmembrane region" description="Helical" evidence="1">
    <location>
        <begin position="3"/>
        <end position="23"/>
    </location>
</feature>
<name>PETL_PYRYE</name>
<protein>
    <recommendedName>
        <fullName evidence="1">Cytochrome b6-f complex subunit 6</fullName>
    </recommendedName>
    <alternativeName>
        <fullName evidence="1">Cytochrome b6-f complex subunit PetL</fullName>
    </alternativeName>
    <alternativeName>
        <fullName evidence="1">Cytochrome b6-f complex subunit VI</fullName>
    </alternativeName>
</protein>
<gene>
    <name evidence="1" type="primary">petL</name>
</gene>
<geneLocation type="chloroplast"/>
<reference key="1">
    <citation type="submission" date="2003-11" db="EMBL/GenBank/DDBJ databases">
        <title>Whole genome sequence of Porphyra yezoensis chloroplast.</title>
        <authorList>
            <person name="Kunimoto M."/>
            <person name="Morishima K."/>
            <person name="Yoshikawa M."/>
            <person name="Fukuda S."/>
            <person name="Kobayashi T."/>
            <person name="Kobayashi M."/>
            <person name="Okazaki T."/>
            <person name="Ohara I."/>
            <person name="Nakayama I."/>
        </authorList>
    </citation>
    <scope>NUCLEOTIDE SEQUENCE [LARGE SCALE GENOMIC DNA]</scope>
    <source>
        <strain>U-51</strain>
    </source>
</reference>